<accession>P53831</accession>
<organism>
    <name type="scientific">Saccharomyces cerevisiae (strain ATCC 204508 / S288c)</name>
    <name type="common">Baker's yeast</name>
    <dbReference type="NCBI Taxonomy" id="559292"/>
    <lineage>
        <taxon>Eukaryota</taxon>
        <taxon>Fungi</taxon>
        <taxon>Dikarya</taxon>
        <taxon>Ascomycota</taxon>
        <taxon>Saccharomycotina</taxon>
        <taxon>Saccharomycetes</taxon>
        <taxon>Saccharomycetales</taxon>
        <taxon>Saccharomycetaceae</taxon>
        <taxon>Saccharomyces</taxon>
    </lineage>
</organism>
<gene>
    <name type="ordered locus">YNL285W</name>
    <name type="ORF">N0552</name>
</gene>
<feature type="chain" id="PRO_0000203376" description="Putative uncharacterized protein YNL285W">
    <location>
        <begin position="1"/>
        <end position="123"/>
    </location>
</feature>
<evidence type="ECO:0000305" key="1">
    <source>
    </source>
</evidence>
<reference key="1">
    <citation type="journal article" date="1997" name="Nature">
        <title>The nucleotide sequence of Saccharomyces cerevisiae chromosome XIV and its evolutionary implications.</title>
        <authorList>
            <person name="Philippsen P."/>
            <person name="Kleine K."/>
            <person name="Poehlmann R."/>
            <person name="Duesterhoeft A."/>
            <person name="Hamberg K."/>
            <person name="Hegemann J.H."/>
            <person name="Obermaier B."/>
            <person name="Urrestarazu L.A."/>
            <person name="Aert R."/>
            <person name="Albermann K."/>
            <person name="Altmann R."/>
            <person name="Andre B."/>
            <person name="Baladron V."/>
            <person name="Ballesta J.P.G."/>
            <person name="Becam A.-M."/>
            <person name="Beinhauer J.D."/>
            <person name="Boskovic J."/>
            <person name="Buitrago M.J."/>
            <person name="Bussereau F."/>
            <person name="Coster F."/>
            <person name="Crouzet M."/>
            <person name="D'Angelo M."/>
            <person name="Dal Pero F."/>
            <person name="De Antoni A."/>
            <person name="del Rey F."/>
            <person name="Doignon F."/>
            <person name="Domdey H."/>
            <person name="Dubois E."/>
            <person name="Fiedler T.A."/>
            <person name="Fleig U."/>
            <person name="Floeth M."/>
            <person name="Fritz C."/>
            <person name="Gaillardin C."/>
            <person name="Garcia-Cantalejo J.M."/>
            <person name="Glansdorff N."/>
            <person name="Goffeau A."/>
            <person name="Gueldener U."/>
            <person name="Herbert C.J."/>
            <person name="Heumann K."/>
            <person name="Heuss-Neitzel D."/>
            <person name="Hilbert H."/>
            <person name="Hinni K."/>
            <person name="Iraqui Houssaini I."/>
            <person name="Jacquet M."/>
            <person name="Jimenez A."/>
            <person name="Jonniaux J.-L."/>
            <person name="Karpfinger-Hartl L."/>
            <person name="Lanfranchi G."/>
            <person name="Lepingle A."/>
            <person name="Levesque H."/>
            <person name="Lyck R."/>
            <person name="Maftahi M."/>
            <person name="Mallet L."/>
            <person name="Maurer C.T.C."/>
            <person name="Messenguy F."/>
            <person name="Mewes H.-W."/>
            <person name="Moestl D."/>
            <person name="Nasr F."/>
            <person name="Nicaud J.-M."/>
            <person name="Niedenthal R.K."/>
            <person name="Pandolfo D."/>
            <person name="Pierard A."/>
            <person name="Piravandi E."/>
            <person name="Planta R.J."/>
            <person name="Pohl T.M."/>
            <person name="Purnelle B."/>
            <person name="Rebischung C."/>
            <person name="Remacha M.A."/>
            <person name="Revuelta J.L."/>
            <person name="Rinke M."/>
            <person name="Saiz J.E."/>
            <person name="Sartorello F."/>
            <person name="Scherens B."/>
            <person name="Sen-Gupta M."/>
            <person name="Soler-Mira A."/>
            <person name="Urbanus J.H.M."/>
            <person name="Valle G."/>
            <person name="Van Dyck L."/>
            <person name="Verhasselt P."/>
            <person name="Vierendeels F."/>
            <person name="Vissers S."/>
            <person name="Voet M."/>
            <person name="Volckaert G."/>
            <person name="Wach A."/>
            <person name="Wambutt R."/>
            <person name="Wedler H."/>
            <person name="Zollner A."/>
            <person name="Hani J."/>
        </authorList>
    </citation>
    <scope>NUCLEOTIDE SEQUENCE [LARGE SCALE GENOMIC DNA]</scope>
    <source>
        <strain>ATCC 204508 / S288c</strain>
    </source>
</reference>
<reference key="2">
    <citation type="journal article" date="2014" name="G3 (Bethesda)">
        <title>The reference genome sequence of Saccharomyces cerevisiae: Then and now.</title>
        <authorList>
            <person name="Engel S.R."/>
            <person name="Dietrich F.S."/>
            <person name="Fisk D.G."/>
            <person name="Binkley G."/>
            <person name="Balakrishnan R."/>
            <person name="Costanzo M.C."/>
            <person name="Dwight S.S."/>
            <person name="Hitz B.C."/>
            <person name="Karra K."/>
            <person name="Nash R.S."/>
            <person name="Weng S."/>
            <person name="Wong E.D."/>
            <person name="Lloyd P."/>
            <person name="Skrzypek M.S."/>
            <person name="Miyasato S.R."/>
            <person name="Simison M."/>
            <person name="Cherry J.M."/>
        </authorList>
    </citation>
    <scope>GENOME REANNOTATION</scope>
    <source>
        <strain>ATCC 204508 / S288c</strain>
    </source>
</reference>
<proteinExistence type="uncertain"/>
<protein>
    <recommendedName>
        <fullName>Putative uncharacterized protein YNL285W</fullName>
    </recommendedName>
</protein>
<sequence>MTSQYKINVDIILENASNAIKKFERYENRTRVPTLEGWDDNHYTNRPCVGWCNCNDEVISDGDYITTETQRLLKRVITTAILIVGINQTSSDNVGTRVINSDMCCYGNNLMLTSYINVHLVYV</sequence>
<dbReference type="EMBL" id="Z71561">
    <property type="protein sequence ID" value="CAA96200.1"/>
    <property type="molecule type" value="Genomic_DNA"/>
</dbReference>
<dbReference type="EMBL" id="Z71560">
    <property type="protein sequence ID" value="CAA96199.1"/>
    <property type="molecule type" value="Genomic_DNA"/>
</dbReference>
<dbReference type="PIR" id="S63259">
    <property type="entry name" value="S63259"/>
</dbReference>
<dbReference type="DIP" id="DIP-4271N"/>
<dbReference type="IntAct" id="P53831">
    <property type="interactions" value="1"/>
</dbReference>
<dbReference type="MINT" id="P53831"/>
<dbReference type="PaxDb" id="4932-YNL285W"/>
<dbReference type="EnsemblFungi" id="YNL285W_mRNA">
    <property type="protein sequence ID" value="YNL285W"/>
    <property type="gene ID" value="YNL285W"/>
</dbReference>
<dbReference type="AGR" id="SGD:S000005229"/>
<dbReference type="SGD" id="S000005229">
    <property type="gene designation" value="YNL285W"/>
</dbReference>
<dbReference type="HOGENOM" id="CLU_2098732_0_0_1"/>
<name>YN25_YEAST</name>
<comment type="caution">
    <text evidence="1">Product of a dubious gene prediction unlikely to encode a functional protein. Because of that it is not part of the S.cerevisiae S288c complete/reference proteome set.</text>
</comment>